<gene>
    <name type="primary">murC</name>
    <name type="ordered locus">TM_0231</name>
</gene>
<accession>Q9WY73</accession>
<keyword id="KW-0002">3D-structure</keyword>
<keyword id="KW-0067">ATP-binding</keyword>
<keyword id="KW-0131">Cell cycle</keyword>
<keyword id="KW-0132">Cell division</keyword>
<keyword id="KW-0133">Cell shape</keyword>
<keyword id="KW-0961">Cell wall biogenesis/degradation</keyword>
<keyword id="KW-0963">Cytoplasm</keyword>
<keyword id="KW-0436">Ligase</keyword>
<keyword id="KW-0547">Nucleotide-binding</keyword>
<keyword id="KW-0573">Peptidoglycan synthesis</keyword>
<keyword id="KW-1185">Reference proteome</keyword>
<dbReference type="EC" id="6.3.2.8"/>
<dbReference type="EMBL" id="AE000512">
    <property type="protein sequence ID" value="AAD35322.1"/>
    <property type="molecule type" value="Genomic_DNA"/>
</dbReference>
<dbReference type="PIR" id="A72402">
    <property type="entry name" value="A72402"/>
</dbReference>
<dbReference type="RefSeq" id="NP_228045.1">
    <property type="nucleotide sequence ID" value="NC_000853.1"/>
</dbReference>
<dbReference type="RefSeq" id="WP_004082924.1">
    <property type="nucleotide sequence ID" value="NC_000853.1"/>
</dbReference>
<dbReference type="PDB" id="1J6U">
    <property type="method" value="X-ray"/>
    <property type="resolution" value="2.30 A"/>
    <property type="chains" value="A=1-457"/>
</dbReference>
<dbReference type="PDBsum" id="1J6U"/>
<dbReference type="SMR" id="Q9WY73"/>
<dbReference type="FunCoup" id="Q9WY73">
    <property type="interactions" value="254"/>
</dbReference>
<dbReference type="STRING" id="243274.TM_0231"/>
<dbReference type="PaxDb" id="243274-THEMA_03570"/>
<dbReference type="EnsemblBacteria" id="AAD35322">
    <property type="protein sequence ID" value="AAD35322"/>
    <property type="gene ID" value="TM_0231"/>
</dbReference>
<dbReference type="KEGG" id="tma:TM0231"/>
<dbReference type="KEGG" id="tmi:THEMA_03570"/>
<dbReference type="KEGG" id="tmm:Tmari_0229"/>
<dbReference type="KEGG" id="tmw:THMA_0238"/>
<dbReference type="eggNOG" id="COG0773">
    <property type="taxonomic scope" value="Bacteria"/>
</dbReference>
<dbReference type="InParanoid" id="Q9WY73"/>
<dbReference type="OrthoDB" id="9804126at2"/>
<dbReference type="BRENDA" id="6.3.2.8">
    <property type="organism ID" value="6331"/>
</dbReference>
<dbReference type="UniPathway" id="UPA00219"/>
<dbReference type="EvolutionaryTrace" id="Q9WY73"/>
<dbReference type="Proteomes" id="UP000008183">
    <property type="component" value="Chromosome"/>
</dbReference>
<dbReference type="GO" id="GO:0005737">
    <property type="term" value="C:cytoplasm"/>
    <property type="evidence" value="ECO:0007669"/>
    <property type="project" value="UniProtKB-SubCell"/>
</dbReference>
<dbReference type="GO" id="GO:0005524">
    <property type="term" value="F:ATP binding"/>
    <property type="evidence" value="ECO:0007669"/>
    <property type="project" value="UniProtKB-UniRule"/>
</dbReference>
<dbReference type="GO" id="GO:0008763">
    <property type="term" value="F:UDP-N-acetylmuramate-L-alanine ligase activity"/>
    <property type="evidence" value="ECO:0007669"/>
    <property type="project" value="UniProtKB-UniRule"/>
</dbReference>
<dbReference type="GO" id="GO:0051301">
    <property type="term" value="P:cell division"/>
    <property type="evidence" value="ECO:0007669"/>
    <property type="project" value="UniProtKB-KW"/>
</dbReference>
<dbReference type="GO" id="GO:0071555">
    <property type="term" value="P:cell wall organization"/>
    <property type="evidence" value="ECO:0007669"/>
    <property type="project" value="UniProtKB-KW"/>
</dbReference>
<dbReference type="GO" id="GO:0009252">
    <property type="term" value="P:peptidoglycan biosynthetic process"/>
    <property type="evidence" value="ECO:0007669"/>
    <property type="project" value="UniProtKB-UniRule"/>
</dbReference>
<dbReference type="GO" id="GO:0008360">
    <property type="term" value="P:regulation of cell shape"/>
    <property type="evidence" value="ECO:0007669"/>
    <property type="project" value="UniProtKB-KW"/>
</dbReference>
<dbReference type="Gene3D" id="3.90.190.20">
    <property type="entry name" value="Mur ligase, C-terminal domain"/>
    <property type="match status" value="1"/>
</dbReference>
<dbReference type="Gene3D" id="3.40.1190.10">
    <property type="entry name" value="Mur-like, catalytic domain"/>
    <property type="match status" value="1"/>
</dbReference>
<dbReference type="Gene3D" id="3.40.50.720">
    <property type="entry name" value="NAD(P)-binding Rossmann-like Domain"/>
    <property type="match status" value="1"/>
</dbReference>
<dbReference type="HAMAP" id="MF_00046">
    <property type="entry name" value="MurC"/>
    <property type="match status" value="1"/>
</dbReference>
<dbReference type="InterPro" id="IPR036565">
    <property type="entry name" value="Mur-like_cat_sf"/>
</dbReference>
<dbReference type="InterPro" id="IPR004101">
    <property type="entry name" value="Mur_ligase_C"/>
</dbReference>
<dbReference type="InterPro" id="IPR036615">
    <property type="entry name" value="Mur_ligase_C_dom_sf"/>
</dbReference>
<dbReference type="InterPro" id="IPR013221">
    <property type="entry name" value="Mur_ligase_cen"/>
</dbReference>
<dbReference type="InterPro" id="IPR000713">
    <property type="entry name" value="Mur_ligase_N"/>
</dbReference>
<dbReference type="InterPro" id="IPR050061">
    <property type="entry name" value="MurCDEF_pg_biosynth"/>
</dbReference>
<dbReference type="InterPro" id="IPR005758">
    <property type="entry name" value="UDP-N-AcMur_Ala_ligase_MurC"/>
</dbReference>
<dbReference type="NCBIfam" id="TIGR01082">
    <property type="entry name" value="murC"/>
    <property type="match status" value="1"/>
</dbReference>
<dbReference type="PANTHER" id="PTHR43445:SF3">
    <property type="entry name" value="UDP-N-ACETYLMURAMATE--L-ALANINE LIGASE"/>
    <property type="match status" value="1"/>
</dbReference>
<dbReference type="PANTHER" id="PTHR43445">
    <property type="entry name" value="UDP-N-ACETYLMURAMATE--L-ALANINE LIGASE-RELATED"/>
    <property type="match status" value="1"/>
</dbReference>
<dbReference type="Pfam" id="PF01225">
    <property type="entry name" value="Mur_ligase"/>
    <property type="match status" value="1"/>
</dbReference>
<dbReference type="Pfam" id="PF02875">
    <property type="entry name" value="Mur_ligase_C"/>
    <property type="match status" value="1"/>
</dbReference>
<dbReference type="Pfam" id="PF08245">
    <property type="entry name" value="Mur_ligase_M"/>
    <property type="match status" value="1"/>
</dbReference>
<dbReference type="SUPFAM" id="SSF51984">
    <property type="entry name" value="MurCD N-terminal domain"/>
    <property type="match status" value="1"/>
</dbReference>
<dbReference type="SUPFAM" id="SSF53623">
    <property type="entry name" value="MurD-like peptide ligases, catalytic domain"/>
    <property type="match status" value="1"/>
</dbReference>
<dbReference type="SUPFAM" id="SSF53244">
    <property type="entry name" value="MurD-like peptide ligases, peptide-binding domain"/>
    <property type="match status" value="1"/>
</dbReference>
<organism>
    <name type="scientific">Thermotoga maritima (strain ATCC 43589 / DSM 3109 / JCM 10099 / NBRC 100826 / MSB8)</name>
    <dbReference type="NCBI Taxonomy" id="243274"/>
    <lineage>
        <taxon>Bacteria</taxon>
        <taxon>Thermotogati</taxon>
        <taxon>Thermotogota</taxon>
        <taxon>Thermotogae</taxon>
        <taxon>Thermotogales</taxon>
        <taxon>Thermotogaceae</taxon>
        <taxon>Thermotoga</taxon>
    </lineage>
</organism>
<evidence type="ECO:0000250" key="1"/>
<evidence type="ECO:0000255" key="2"/>
<evidence type="ECO:0000305" key="3"/>
<evidence type="ECO:0007829" key="4">
    <source>
        <dbReference type="PDB" id="1J6U"/>
    </source>
</evidence>
<sequence length="457" mass="51872">MKIHFVGIGGIGMSAVALHEFSNGNDVYGSNIEETERTAYLRKLGIPIFVPHSADNWYDPDLVIKTPAVRDDNPEIVRARMERVPIENRLHYFRDTLKREKKEEFAVTGTDGKTTTTAMVAHVLKHLRKSPTVFLGGIMDSLEHGNYEKGNGPVVYELDESEEFFSEFSPNYLIITNARGDHLENYGNSLTRYRSAFEKISRNTDLVVTFAEDELTSHLGDVTFGVKKGTYTLEMRSASRAEQKAMVEKNGKRYLELKLKVPGFHNVLNALAVIALFDSLGYDLAPVLEALEEFRGVHRRFSIAFHDPETNIYVIDDYAHTPDEIRNLLQTAKEVFENEKIVVIFQPHRYSRLEREDGNFAKALQLADEVVVTEVYDAFEEKKNGISGKMIWDSLKSLGKEAYFVEKLPELEKVISVSENTVFLFVGAGDIIYSSRRFVERYQSSKSSPSRVLGSNK</sequence>
<name>MURC_THEMA</name>
<comment type="function">
    <text>Cell wall formation.</text>
</comment>
<comment type="catalytic activity">
    <reaction>
        <text>UDP-N-acetyl-alpha-D-muramate + L-alanine + ATP = UDP-N-acetyl-alpha-D-muramoyl-L-alanine + ADP + phosphate + H(+)</text>
        <dbReference type="Rhea" id="RHEA:23372"/>
        <dbReference type="ChEBI" id="CHEBI:15378"/>
        <dbReference type="ChEBI" id="CHEBI:30616"/>
        <dbReference type="ChEBI" id="CHEBI:43474"/>
        <dbReference type="ChEBI" id="CHEBI:57972"/>
        <dbReference type="ChEBI" id="CHEBI:70757"/>
        <dbReference type="ChEBI" id="CHEBI:83898"/>
        <dbReference type="ChEBI" id="CHEBI:456216"/>
        <dbReference type="EC" id="6.3.2.8"/>
    </reaction>
</comment>
<comment type="pathway">
    <text>Cell wall biogenesis; peptidoglycan biosynthesis.</text>
</comment>
<comment type="subcellular location">
    <subcellularLocation>
        <location evidence="1">Cytoplasm</location>
    </subcellularLocation>
</comment>
<comment type="similarity">
    <text evidence="3">Belongs to the MurCDEF family.</text>
</comment>
<protein>
    <recommendedName>
        <fullName>UDP-N-acetylmuramate--L-alanine ligase</fullName>
        <ecNumber>6.3.2.8</ecNumber>
    </recommendedName>
    <alternativeName>
        <fullName>UDP-N-acetylmuramoyl-L-alanine synthetase</fullName>
    </alternativeName>
</protein>
<reference key="1">
    <citation type="journal article" date="1999" name="Nature">
        <title>Evidence for lateral gene transfer between Archaea and Bacteria from genome sequence of Thermotoga maritima.</title>
        <authorList>
            <person name="Nelson K.E."/>
            <person name="Clayton R.A."/>
            <person name="Gill S.R."/>
            <person name="Gwinn M.L."/>
            <person name="Dodson R.J."/>
            <person name="Haft D.H."/>
            <person name="Hickey E.K."/>
            <person name="Peterson J.D."/>
            <person name="Nelson W.C."/>
            <person name="Ketchum K.A."/>
            <person name="McDonald L.A."/>
            <person name="Utterback T.R."/>
            <person name="Malek J.A."/>
            <person name="Linher K.D."/>
            <person name="Garrett M.M."/>
            <person name="Stewart A.M."/>
            <person name="Cotton M.D."/>
            <person name="Pratt M.S."/>
            <person name="Phillips C.A."/>
            <person name="Richardson D.L."/>
            <person name="Heidelberg J.F."/>
            <person name="Sutton G.G."/>
            <person name="Fleischmann R.D."/>
            <person name="Eisen J.A."/>
            <person name="White O."/>
            <person name="Salzberg S.L."/>
            <person name="Smith H.O."/>
            <person name="Venter J.C."/>
            <person name="Fraser C.M."/>
        </authorList>
    </citation>
    <scope>NUCLEOTIDE SEQUENCE [LARGE SCALE GENOMIC DNA]</scope>
    <source>
        <strain>ATCC 43589 / DSM 3109 / JCM 10099 / NBRC 100826 / MSB8</strain>
    </source>
</reference>
<reference key="2">
    <citation type="journal article" date="2004" name="Proteins">
        <title>Crystal structure of an UDP-N-acetylmuramate-alanine ligase MurC (TM0231) from Thermotoga maritima at 2.3-A resolution.</title>
        <authorList>
            <person name="Spraggon G."/>
            <person name="Schwarzenbacher R."/>
            <person name="Kreusch A."/>
            <person name="Lee C.C."/>
            <person name="Abdubek P."/>
            <person name="Ambing E."/>
            <person name="Biorac T."/>
            <person name="Brinen L.S."/>
            <person name="Canaves J.M."/>
            <person name="Cambell J."/>
            <person name="Chiu H.-J."/>
            <person name="Dai X."/>
            <person name="Deacon A.M."/>
            <person name="DiDonato M."/>
            <person name="Elsliger M.-A."/>
            <person name="Eshagi S."/>
            <person name="Floyd R."/>
            <person name="Godzik A."/>
            <person name="Grittini C."/>
            <person name="Grzechnik S.K."/>
            <person name="Hampton E."/>
            <person name="Jaroszewski L."/>
            <person name="Karlak C."/>
            <person name="Klock H.E."/>
            <person name="Koesema E."/>
            <person name="Kovarik J.S."/>
            <person name="Kuhn P."/>
            <person name="Levin I."/>
            <person name="McMullan D."/>
            <person name="McPhillips T.M."/>
            <person name="Miller M.D."/>
            <person name="Morse A."/>
            <person name="Moy K."/>
            <person name="Ouyang J."/>
            <person name="Page R."/>
            <person name="Quijano K."/>
            <person name="Robb A."/>
            <person name="Stevens R.C."/>
            <person name="van den Bedem H."/>
            <person name="Velasquez J."/>
            <person name="Vincent J."/>
            <person name="von Delft F."/>
            <person name="Wang X."/>
            <person name="West B."/>
            <person name="Wolf G."/>
            <person name="Xu Q."/>
            <person name="Hodgson K.O."/>
            <person name="Wooley J."/>
            <person name="Lesley S.A."/>
            <person name="Wilson I.A."/>
        </authorList>
    </citation>
    <scope>X-RAY CRYSTALLOGRAPHY (2.3 ANGSTROMS)</scope>
</reference>
<feature type="chain" id="PRO_0000182177" description="UDP-N-acetylmuramate--L-alanine ligase">
    <location>
        <begin position="1"/>
        <end position="457"/>
    </location>
</feature>
<feature type="binding site" evidence="2">
    <location>
        <begin position="109"/>
        <end position="115"/>
    </location>
    <ligand>
        <name>ATP</name>
        <dbReference type="ChEBI" id="CHEBI:30616"/>
    </ligand>
</feature>
<feature type="strand" evidence="4">
    <location>
        <begin position="2"/>
        <end position="6"/>
    </location>
</feature>
<feature type="turn" evidence="4">
    <location>
        <begin position="7"/>
        <end position="9"/>
    </location>
</feature>
<feature type="helix" evidence="4">
    <location>
        <begin position="11"/>
        <end position="22"/>
    </location>
</feature>
<feature type="strand" evidence="4">
    <location>
        <begin position="26"/>
        <end position="30"/>
    </location>
</feature>
<feature type="helix" evidence="4">
    <location>
        <begin position="36"/>
        <end position="43"/>
    </location>
</feature>
<feature type="strand" evidence="4">
    <location>
        <begin position="48"/>
        <end position="51"/>
    </location>
</feature>
<feature type="strand" evidence="4">
    <location>
        <begin position="61"/>
        <end position="65"/>
    </location>
</feature>
<feature type="helix" evidence="4">
    <location>
        <begin position="74"/>
        <end position="81"/>
    </location>
</feature>
<feature type="strand" evidence="4">
    <location>
        <begin position="86"/>
        <end position="88"/>
    </location>
</feature>
<feature type="helix" evidence="4">
    <location>
        <begin position="89"/>
        <end position="100"/>
    </location>
</feature>
<feature type="strand" evidence="4">
    <location>
        <begin position="104"/>
        <end position="108"/>
    </location>
</feature>
<feature type="strand" evidence="4">
    <location>
        <begin position="110"/>
        <end position="112"/>
    </location>
</feature>
<feature type="helix" evidence="4">
    <location>
        <begin position="113"/>
        <end position="126"/>
    </location>
</feature>
<feature type="strand" evidence="4">
    <location>
        <begin position="132"/>
        <end position="134"/>
    </location>
</feature>
<feature type="strand" evidence="4">
    <location>
        <begin position="145"/>
        <end position="148"/>
    </location>
</feature>
<feature type="strand" evidence="4">
    <location>
        <begin position="154"/>
        <end position="158"/>
    </location>
</feature>
<feature type="helix" evidence="4">
    <location>
        <begin position="163"/>
        <end position="167"/>
    </location>
</feature>
<feature type="strand" evidence="4">
    <location>
        <begin position="171"/>
        <end position="175"/>
    </location>
</feature>
<feature type="helix" evidence="4">
    <location>
        <begin position="183"/>
        <end position="186"/>
    </location>
</feature>
<feature type="helix" evidence="4">
    <location>
        <begin position="190"/>
        <end position="202"/>
    </location>
</feature>
<feature type="strand" evidence="4">
    <location>
        <begin position="205"/>
        <end position="210"/>
    </location>
</feature>
<feature type="turn" evidence="4">
    <location>
        <begin position="214"/>
        <end position="216"/>
    </location>
</feature>
<feature type="helix" evidence="4">
    <location>
        <begin position="217"/>
        <end position="219"/>
    </location>
</feature>
<feature type="strand" evidence="4">
    <location>
        <begin position="221"/>
        <end position="224"/>
    </location>
</feature>
<feature type="strand" evidence="4">
    <location>
        <begin position="226"/>
        <end position="238"/>
    </location>
</feature>
<feature type="strand" evidence="4">
    <location>
        <begin position="243"/>
        <end position="249"/>
    </location>
</feature>
<feature type="strand" evidence="4">
    <location>
        <begin position="252"/>
        <end position="261"/>
    </location>
</feature>
<feature type="helix" evidence="4">
    <location>
        <begin position="264"/>
        <end position="279"/>
    </location>
</feature>
<feature type="helix" evidence="4">
    <location>
        <begin position="284"/>
        <end position="293"/>
    </location>
</feature>
<feature type="strand" evidence="4">
    <location>
        <begin position="300"/>
        <end position="307"/>
    </location>
</feature>
<feature type="turn" evidence="4">
    <location>
        <begin position="308"/>
        <end position="311"/>
    </location>
</feature>
<feature type="strand" evidence="4">
    <location>
        <begin position="312"/>
        <end position="317"/>
    </location>
</feature>
<feature type="helix" evidence="4">
    <location>
        <begin position="322"/>
        <end position="335"/>
    </location>
</feature>
<feature type="strand" evidence="4">
    <location>
        <begin position="337"/>
        <end position="345"/>
    </location>
</feature>
<feature type="helix" evidence="4">
    <location>
        <begin position="359"/>
        <end position="364"/>
    </location>
</feature>
<feature type="strand" evidence="4">
    <location>
        <begin position="367"/>
        <end position="372"/>
    </location>
</feature>
<feature type="helix" evidence="4">
    <location>
        <begin position="388"/>
        <end position="397"/>
    </location>
</feature>
<feature type="strand" evidence="4">
    <location>
        <begin position="402"/>
        <end position="404"/>
    </location>
</feature>
<feature type="helix" evidence="4">
    <location>
        <begin position="408"/>
        <end position="410"/>
    </location>
</feature>
<feature type="helix" evidence="4">
    <location>
        <begin position="411"/>
        <end position="414"/>
    </location>
</feature>
<feature type="strand" evidence="4">
    <location>
        <begin position="419"/>
        <end position="426"/>
    </location>
</feature>
<feature type="helix" evidence="4">
    <location>
        <begin position="431"/>
        <end position="445"/>
    </location>
</feature>
<proteinExistence type="evidence at protein level"/>